<accession>Q9PQX2</accession>
<dbReference type="EMBL" id="AF222894">
    <property type="protein sequence ID" value="AAF30578.1"/>
    <property type="molecule type" value="Genomic_DNA"/>
</dbReference>
<dbReference type="RefSeq" id="WP_010891701.1">
    <property type="nucleotide sequence ID" value="NC_002162.1"/>
</dbReference>
<dbReference type="EnsemblBacteria" id="AAF30578">
    <property type="protein sequence ID" value="AAF30578"/>
    <property type="gene ID" value="UU171"/>
</dbReference>
<dbReference type="GeneID" id="29672681"/>
<dbReference type="KEGG" id="uur:UU171"/>
<dbReference type="HOGENOM" id="CLU_069143_0_0_14"/>
<dbReference type="OrthoDB" id="405730at2"/>
<dbReference type="Proteomes" id="UP000000423">
    <property type="component" value="Chromosome"/>
</dbReference>
<dbReference type="InterPro" id="IPR009849">
    <property type="entry name" value="DUF1410"/>
</dbReference>
<dbReference type="Pfam" id="PF07198">
    <property type="entry name" value="DUF1410"/>
    <property type="match status" value="1"/>
</dbReference>
<organism>
    <name type="scientific">Ureaplasma parvum serovar 3 (strain ATCC 700970)</name>
    <dbReference type="NCBI Taxonomy" id="273119"/>
    <lineage>
        <taxon>Bacteria</taxon>
        <taxon>Bacillati</taxon>
        <taxon>Mycoplasmatota</taxon>
        <taxon>Mycoplasmoidales</taxon>
        <taxon>Mycoplasmoidaceae</taxon>
        <taxon>Ureaplasma</taxon>
    </lineage>
</organism>
<feature type="chain" id="PRO_0000220828" description="Uncharacterized protein UU171">
    <location>
        <begin position="1"/>
        <end position="199"/>
    </location>
</feature>
<gene>
    <name type="ordered locus">UU171</name>
</gene>
<keyword id="KW-1185">Reference proteome</keyword>
<name>Y171_UREPA</name>
<protein>
    <recommendedName>
        <fullName>Uncharacterized protein UU171</fullName>
    </recommendedName>
</protein>
<sequence length="199" mass="22661">MIANKITINKIQNGTATIEVTFSKFKLADANKKDFVLEVKDSANDDASAISATELVFDANKKILTGKLNGLASNINYKISKFTLNNNEIKFDFKQEDQQELLNQYIQQAELNTIIDKANKKINIKLQNFSILNSFQDNQPVLTFDIEINKKDGITQVVHKSLTKNQLLNPNGLEIDLKDKMKNNIDYWTLAYVVWFLAI</sequence>
<reference key="1">
    <citation type="journal article" date="2000" name="Nature">
        <title>The complete sequence of the mucosal pathogen Ureaplasma urealyticum.</title>
        <authorList>
            <person name="Glass J.I."/>
            <person name="Lefkowitz E.J."/>
            <person name="Glass J.S."/>
            <person name="Heiner C.R."/>
            <person name="Chen E.Y."/>
            <person name="Cassell G.H."/>
        </authorList>
    </citation>
    <scope>NUCLEOTIDE SEQUENCE [LARGE SCALE GENOMIC DNA]</scope>
    <source>
        <strain>ATCC 700970</strain>
    </source>
</reference>
<comment type="similarity">
    <text evidence="1">To U.parvum UU376.</text>
</comment>
<proteinExistence type="predicted"/>
<evidence type="ECO:0000305" key="1"/>